<accession>Q9Z767</accession>
<reference key="1">
    <citation type="journal article" date="1999" name="Nat. Genet.">
        <title>Comparative genomes of Chlamydia pneumoniae and C. trachomatis.</title>
        <authorList>
            <person name="Kalman S."/>
            <person name="Mitchell W.P."/>
            <person name="Marathe R."/>
            <person name="Lammel C.J."/>
            <person name="Fan J."/>
            <person name="Hyman R.W."/>
            <person name="Olinger L."/>
            <person name="Grimwood J."/>
            <person name="Davis R.W."/>
            <person name="Stephens R.S."/>
        </authorList>
    </citation>
    <scope>NUCLEOTIDE SEQUENCE [LARGE SCALE GENOMIC DNA]</scope>
    <source>
        <strain>CWL029</strain>
    </source>
</reference>
<reference key="2">
    <citation type="journal article" date="2000" name="Nucleic Acids Res.">
        <title>Genome sequences of Chlamydia trachomatis MoPn and Chlamydia pneumoniae AR39.</title>
        <authorList>
            <person name="Read T.D."/>
            <person name="Brunham R.C."/>
            <person name="Shen C."/>
            <person name="Gill S.R."/>
            <person name="Heidelberg J.F."/>
            <person name="White O."/>
            <person name="Hickey E.K."/>
            <person name="Peterson J.D."/>
            <person name="Utterback T.R."/>
            <person name="Berry K.J."/>
            <person name="Bass S."/>
            <person name="Linher K.D."/>
            <person name="Weidman J.F."/>
            <person name="Khouri H.M."/>
            <person name="Craven B."/>
            <person name="Bowman C."/>
            <person name="Dodson R.J."/>
            <person name="Gwinn M.L."/>
            <person name="Nelson W.C."/>
            <person name="DeBoy R.T."/>
            <person name="Kolonay J.F."/>
            <person name="McClarty G."/>
            <person name="Salzberg S.L."/>
            <person name="Eisen J.A."/>
            <person name="Fraser C.M."/>
        </authorList>
    </citation>
    <scope>NUCLEOTIDE SEQUENCE [LARGE SCALE GENOMIC DNA]</scope>
    <source>
        <strain>AR39</strain>
    </source>
</reference>
<reference key="3">
    <citation type="journal article" date="2000" name="Nucleic Acids Res.">
        <title>Comparison of whole genome sequences of Chlamydia pneumoniae J138 from Japan and CWL029 from USA.</title>
        <authorList>
            <person name="Shirai M."/>
            <person name="Hirakawa H."/>
            <person name="Kimoto M."/>
            <person name="Tabuchi M."/>
            <person name="Kishi F."/>
            <person name="Ouchi K."/>
            <person name="Shiba T."/>
            <person name="Ishii K."/>
            <person name="Hattori M."/>
            <person name="Kuhara S."/>
            <person name="Nakazawa T."/>
        </authorList>
    </citation>
    <scope>NUCLEOTIDE SEQUENCE [LARGE SCALE GENOMIC DNA]</scope>
    <source>
        <strain>J138</strain>
    </source>
</reference>
<reference key="4">
    <citation type="submission" date="2002-05" db="EMBL/GenBank/DDBJ databases">
        <title>The genome sequence of Chlamydia pneumoniae TW183 and comparison with other Chlamydia strains based on whole genome sequence analysis.</title>
        <authorList>
            <person name="Geng M.M."/>
            <person name="Schuhmacher A."/>
            <person name="Muehldorfer I."/>
            <person name="Bensch K.W."/>
            <person name="Schaefer K.P."/>
            <person name="Schneider S."/>
            <person name="Pohl T."/>
            <person name="Essig A."/>
            <person name="Marre R."/>
            <person name="Melchers K."/>
        </authorList>
    </citation>
    <scope>NUCLEOTIDE SEQUENCE [LARGE SCALE GENOMIC DNA]</scope>
    <source>
        <strain>TW-183</strain>
    </source>
</reference>
<dbReference type="EC" id="4.1.1.65" evidence="1"/>
<dbReference type="EMBL" id="AE001363">
    <property type="protein sequence ID" value="AAD18977.1"/>
    <property type="molecule type" value="Genomic_DNA"/>
</dbReference>
<dbReference type="EMBL" id="AE002161">
    <property type="protein sequence ID" value="AAF38806.1"/>
    <property type="molecule type" value="Genomic_DNA"/>
</dbReference>
<dbReference type="EMBL" id="BA000008">
    <property type="protein sequence ID" value="BAA99047.1"/>
    <property type="molecule type" value="Genomic_DNA"/>
</dbReference>
<dbReference type="EMBL" id="AE009440">
    <property type="protein sequence ID" value="AAP98797.1"/>
    <property type="molecule type" value="Genomic_DNA"/>
</dbReference>
<dbReference type="PIR" id="E86595">
    <property type="entry name" value="E86595"/>
</dbReference>
<dbReference type="PIR" id="F72029">
    <property type="entry name" value="F72029"/>
</dbReference>
<dbReference type="RefSeq" id="NP_225034.1">
    <property type="nucleotide sequence ID" value="NC_000922.1"/>
</dbReference>
<dbReference type="RefSeq" id="WP_010883476.1">
    <property type="nucleotide sequence ID" value="NZ_LN847257.1"/>
</dbReference>
<dbReference type="SMR" id="Q9Z767"/>
<dbReference type="STRING" id="406984.CPK_ORF00246"/>
<dbReference type="GeneID" id="45050893"/>
<dbReference type="KEGG" id="cpa:CP_1030"/>
<dbReference type="KEGG" id="cpj:psdD"/>
<dbReference type="KEGG" id="cpn:CPn_0839"/>
<dbReference type="KEGG" id="cpt:CpB0868"/>
<dbReference type="PATRIC" id="fig|115713.3.peg.919"/>
<dbReference type="eggNOG" id="COG0688">
    <property type="taxonomic scope" value="Bacteria"/>
</dbReference>
<dbReference type="HOGENOM" id="CLU_029061_2_2_0"/>
<dbReference type="OrthoDB" id="9802030at2"/>
<dbReference type="UniPathway" id="UPA00558">
    <property type="reaction ID" value="UER00616"/>
</dbReference>
<dbReference type="Proteomes" id="UP000000583">
    <property type="component" value="Chromosome"/>
</dbReference>
<dbReference type="Proteomes" id="UP000000801">
    <property type="component" value="Chromosome"/>
</dbReference>
<dbReference type="GO" id="GO:0005886">
    <property type="term" value="C:plasma membrane"/>
    <property type="evidence" value="ECO:0007669"/>
    <property type="project" value="UniProtKB-SubCell"/>
</dbReference>
<dbReference type="GO" id="GO:0004609">
    <property type="term" value="F:phosphatidylserine decarboxylase activity"/>
    <property type="evidence" value="ECO:0007669"/>
    <property type="project" value="UniProtKB-UniRule"/>
</dbReference>
<dbReference type="GO" id="GO:0006646">
    <property type="term" value="P:phosphatidylethanolamine biosynthetic process"/>
    <property type="evidence" value="ECO:0007669"/>
    <property type="project" value="UniProtKB-UniRule"/>
</dbReference>
<dbReference type="HAMAP" id="MF_00663">
    <property type="entry name" value="PS_decarb_PSD_B_type2"/>
    <property type="match status" value="1"/>
</dbReference>
<dbReference type="InterPro" id="IPR003817">
    <property type="entry name" value="PS_Dcarbxylase"/>
</dbReference>
<dbReference type="InterPro" id="IPR033177">
    <property type="entry name" value="PSD-B"/>
</dbReference>
<dbReference type="InterPro" id="IPR033179">
    <property type="entry name" value="PSD_type2_pro"/>
</dbReference>
<dbReference type="NCBIfam" id="NF001941">
    <property type="entry name" value="PRK00723.1"/>
    <property type="match status" value="1"/>
</dbReference>
<dbReference type="NCBIfam" id="TIGR00163">
    <property type="entry name" value="PS_decarb"/>
    <property type="match status" value="1"/>
</dbReference>
<dbReference type="PANTHER" id="PTHR10067">
    <property type="entry name" value="PHOSPHATIDYLSERINE DECARBOXYLASE"/>
    <property type="match status" value="1"/>
</dbReference>
<dbReference type="PANTHER" id="PTHR10067:SF17">
    <property type="entry name" value="PHOSPHATIDYLSERINE DECARBOXYLASE PROENZYME 2"/>
    <property type="match status" value="1"/>
</dbReference>
<dbReference type="Pfam" id="PF02666">
    <property type="entry name" value="PS_Dcarbxylase"/>
    <property type="match status" value="1"/>
</dbReference>
<protein>
    <recommendedName>
        <fullName evidence="1">Phosphatidylserine decarboxylase proenzyme</fullName>
        <ecNumber evidence="1">4.1.1.65</ecNumber>
    </recommendedName>
    <component>
        <recommendedName>
            <fullName evidence="1">Phosphatidylserine decarboxylase alpha chain</fullName>
        </recommendedName>
    </component>
    <component>
        <recommendedName>
            <fullName evidence="1">Phosphatidylserine decarboxylase beta chain</fullName>
        </recommendedName>
    </component>
</protein>
<gene>
    <name evidence="1" type="primary">psd</name>
    <name type="synonym">psdD</name>
    <name type="ordered locus">CPn_0839</name>
    <name type="ordered locus">CP_1030</name>
    <name type="ordered locus">CpB0868</name>
</gene>
<comment type="function">
    <text evidence="1">Catalyzes the formation of phosphatidylethanolamine (PtdEtn) from phosphatidylserine (PtdSer).</text>
</comment>
<comment type="catalytic activity">
    <reaction evidence="1">
        <text>a 1,2-diacyl-sn-glycero-3-phospho-L-serine + H(+) = a 1,2-diacyl-sn-glycero-3-phosphoethanolamine + CO2</text>
        <dbReference type="Rhea" id="RHEA:20828"/>
        <dbReference type="ChEBI" id="CHEBI:15378"/>
        <dbReference type="ChEBI" id="CHEBI:16526"/>
        <dbReference type="ChEBI" id="CHEBI:57262"/>
        <dbReference type="ChEBI" id="CHEBI:64612"/>
        <dbReference type="EC" id="4.1.1.65"/>
    </reaction>
</comment>
<comment type="cofactor">
    <cofactor evidence="1">
        <name>pyruvate</name>
        <dbReference type="ChEBI" id="CHEBI:15361"/>
    </cofactor>
    <text evidence="1">Binds 1 pyruvoyl group covalently per subunit.</text>
</comment>
<comment type="pathway">
    <text evidence="1">Phospholipid metabolism; phosphatidylethanolamine biosynthesis; phosphatidylethanolamine from CDP-diacylglycerol: step 2/2.</text>
</comment>
<comment type="subunit">
    <text evidence="1">Heterodimer of a large membrane-associated beta subunit and a small pyruvoyl-containing alpha subunit.</text>
</comment>
<comment type="subcellular location">
    <subcellularLocation>
        <location evidence="1">Cell membrane</location>
        <topology evidence="1">Peripheral membrane protein</topology>
    </subcellularLocation>
</comment>
<comment type="PTM">
    <text evidence="1">Is synthesized initially as an inactive proenzyme. Formation of the active enzyme involves a self-maturation process in which the active site pyruvoyl group is generated from an internal serine residue via an autocatalytic post-translational modification. Two non-identical subunits are generated from the proenzyme in this reaction, and the pyruvate is formed at the N-terminus of the alpha chain, which is derived from the carboxyl end of the proenzyme. The autoendoproteolytic cleavage occurs by a canonical serine protease mechanism, in which the side chain hydroxyl group of the serine supplies its oxygen atom to form the C-terminus of the beta chain, while the remainder of the serine residue undergoes an oxidative deamination to produce ammonia and the pyruvoyl prosthetic group on the alpha chain. During this reaction, the Ser that is part of the protease active site of the proenzyme becomes the pyruvoyl prosthetic group, which constitutes an essential element of the active site of the mature decarboxylase.</text>
</comment>
<comment type="similarity">
    <text evidence="1">Belongs to the phosphatidylserine decarboxylase family. PSD-B subfamily. Prokaryotic type II sub-subfamily.</text>
</comment>
<evidence type="ECO:0000255" key="1">
    <source>
        <dbReference type="HAMAP-Rule" id="MF_00663"/>
    </source>
</evidence>
<name>PSD_CHLPN</name>
<keyword id="KW-1003">Cell membrane</keyword>
<keyword id="KW-0210">Decarboxylase</keyword>
<keyword id="KW-0444">Lipid biosynthesis</keyword>
<keyword id="KW-0443">Lipid metabolism</keyword>
<keyword id="KW-0456">Lyase</keyword>
<keyword id="KW-0472">Membrane</keyword>
<keyword id="KW-0594">Phospholipid biosynthesis</keyword>
<keyword id="KW-1208">Phospholipid metabolism</keyword>
<keyword id="KW-0670">Pyruvate</keyword>
<keyword id="KW-0865">Zymogen</keyword>
<organism>
    <name type="scientific">Chlamydia pneumoniae</name>
    <name type="common">Chlamydophila pneumoniae</name>
    <dbReference type="NCBI Taxonomy" id="83558"/>
    <lineage>
        <taxon>Bacteria</taxon>
        <taxon>Pseudomonadati</taxon>
        <taxon>Chlamydiota</taxon>
        <taxon>Chlamydiia</taxon>
        <taxon>Chlamydiales</taxon>
        <taxon>Chlamydiaceae</taxon>
        <taxon>Chlamydia/Chlamydophila group</taxon>
        <taxon>Chlamydia</taxon>
    </lineage>
</organism>
<sequence length="301" mass="34827">MQKPQYIDRITKKKVIEPIFYEKTMLFLYNSKLGKKLSVFLSTHPIFSRIYGWLQRCSWTRRQIRPFMNRYKISEKELTKPVADFTSFNDFFTRKLKPEARPIVGGKEVFITPVDGRYLVYPNVSEFDKFIVKSKAFSLPKLLGDHELTKLYAHGSIVFARLAPFDYHRFHFPCDCLPQKTRCVNGALFSVHPLAVKDNFILFCENKRTVTVLETEQFGNVLYLEVGAMNVGSIVQTFSPNQTYAKGDEKGFFAFGGSTVILLFLPNAIRFDNDLLKNSRMGFETRCLMGQSLGRSQREEI</sequence>
<feature type="chain" id="PRO_0000029731" description="Phosphatidylserine decarboxylase beta chain" evidence="1">
    <location>
        <begin position="1"/>
        <end position="257"/>
    </location>
</feature>
<feature type="chain" id="PRO_0000029732" description="Phosphatidylserine decarboxylase alpha chain" evidence="1">
    <location>
        <begin position="258"/>
        <end position="301"/>
    </location>
</feature>
<feature type="active site" description="Charge relay system; for autoendoproteolytic cleavage activity" evidence="1">
    <location>
        <position position="115"/>
    </location>
</feature>
<feature type="active site" description="Charge relay system; for autoendoproteolytic cleavage activity" evidence="1">
    <location>
        <position position="171"/>
    </location>
</feature>
<feature type="active site" description="Charge relay system; for autoendoproteolytic cleavage activity" evidence="1">
    <location>
        <position position="258"/>
    </location>
</feature>
<feature type="active site" description="Schiff-base intermediate with substrate; via pyruvic acid; for decarboxylase activity" evidence="1">
    <location>
        <position position="258"/>
    </location>
</feature>
<feature type="site" description="Cleavage (non-hydrolytic); by autocatalysis" evidence="1">
    <location>
        <begin position="257"/>
        <end position="258"/>
    </location>
</feature>
<feature type="modified residue" description="Pyruvic acid (Ser); by autocatalysis" evidence="1">
    <location>
        <position position="258"/>
    </location>
</feature>
<proteinExistence type="inferred from homology"/>